<gene>
    <name evidence="7" type="primary">STY17</name>
    <name evidence="9" type="ordered locus">At4g35780</name>
    <name evidence="10" type="ORF">F8D20.290</name>
</gene>
<proteinExistence type="evidence at protein level"/>
<feature type="chain" id="PRO_0000433999" description="Serine/threonine-protein kinase STY17">
    <location>
        <begin position="1"/>
        <end position="570"/>
    </location>
</feature>
<feature type="domain" description="ACT" evidence="3">
    <location>
        <begin position="180"/>
        <end position="260"/>
    </location>
</feature>
<feature type="domain" description="Protein kinase" evidence="2">
    <location>
        <begin position="292"/>
        <end position="545"/>
    </location>
</feature>
<feature type="region of interest" description="Disordered" evidence="4">
    <location>
        <begin position="112"/>
        <end position="145"/>
    </location>
</feature>
<feature type="compositionally biased region" description="Polar residues" evidence="4">
    <location>
        <begin position="129"/>
        <end position="145"/>
    </location>
</feature>
<feature type="active site" description="Proton acceptor" evidence="2">
    <location>
        <position position="413"/>
    </location>
</feature>
<feature type="binding site" evidence="2">
    <location>
        <begin position="298"/>
        <end position="306"/>
    </location>
    <ligand>
        <name>ATP</name>
        <dbReference type="ChEBI" id="CHEBI:30616"/>
    </ligand>
</feature>
<feature type="binding site" evidence="2">
    <location>
        <position position="319"/>
    </location>
    <ligand>
        <name>ATP</name>
        <dbReference type="ChEBI" id="CHEBI:30616"/>
    </ligand>
</feature>
<feature type="modified residue" description="Phosphoserine" evidence="1">
    <location>
        <position position="441"/>
    </location>
</feature>
<feature type="modified residue" description="Phosphothreonine" evidence="6">
    <location>
        <position position="445"/>
    </location>
</feature>
<feature type="mutagenesis site" description="Loss of autophosphorylation and enzyme activation." evidence="6">
    <original>T</original>
    <variation>A</variation>
    <location>
        <position position="445"/>
    </location>
</feature>
<evidence type="ECO:0000250" key="1">
    <source>
        <dbReference type="UniProtKB" id="O22558"/>
    </source>
</evidence>
<evidence type="ECO:0000255" key="2">
    <source>
        <dbReference type="PROSITE-ProRule" id="PRU00159"/>
    </source>
</evidence>
<evidence type="ECO:0000255" key="3">
    <source>
        <dbReference type="PROSITE-ProRule" id="PRU01007"/>
    </source>
</evidence>
<evidence type="ECO:0000256" key="4">
    <source>
        <dbReference type="SAM" id="MobiDB-lite"/>
    </source>
</evidence>
<evidence type="ECO:0000269" key="5">
    <source>
    </source>
</evidence>
<evidence type="ECO:0000269" key="6">
    <source>
    </source>
</evidence>
<evidence type="ECO:0000303" key="7">
    <source>
    </source>
</evidence>
<evidence type="ECO:0000305" key="8"/>
<evidence type="ECO:0000312" key="9">
    <source>
        <dbReference type="Araport" id="AT4G35780"/>
    </source>
</evidence>
<evidence type="ECO:0000312" key="10">
    <source>
        <dbReference type="EMBL" id="CAA20048.1"/>
    </source>
</evidence>
<accession>Q8RWL6</accession>
<accession>O81808</accession>
<sequence length="570" mass="64696">MAIKEETEESCGSRAVVASITKESPRQHRMKLEVYGEVLQRIQESNYEEANFPGFDDLLWLHFNRLPARYALDVNVERAEDVLTHQRLLKLAEDPATRPVFEVRCVQVSPTLNGNSGDVDPSDPAVNEDAQSSYNSRSLAPPTFGSSPNFEALTQAYKDHAQDDDSAVNAQLPNSRPMHEITFSTIDRPKLLSQLTSMLGELGLNIQEAHAFSTADGFSLDVFVVDGWSQEETEGLKDALKKEIRKFKDQPCSKQKSITFFEHDKSTNELLPACVEIPTDGTDEWEIDMKQLKIEKKVACGSYGELFRGTYCSQEVAIKILKPERVNAEMLREFSQEVYIMRKVRHKNVVQFIGACTRSPNLCIVTEFMTRGSIYDFLHKHKGVFKIQSLLKVALDVSKGMNYLHQNNIIHRDLKTANLLMDEHEVVKVADFGVARVQTESGVMTAETGTYRWMAPEVIEHKPYDHRADVFSYAIVLWELLTGELPYSYLTPLQAAVGVVQKGLRPKIPKETHPKLTELLEKCWQQDPALRPNFAEIIEMLNQLIREVGDDERHKDKHGGYFSGLKKGHR</sequence>
<name>STY17_ARATH</name>
<comment type="function">
    <text evidence="5 6">Serine/threonine protein kinase that specifically phosphorylates chloroplast precursor proteins in the cytosol within the cleavable presequences (transit peptides). May be part of a cytosolic regulatory network involved in chloroplast protein import. Does not phosphorylate mitochondrion precursor proteins. Specific for ATP and does not utilize other NTPs (PubMed:16429265, PubMed:17090544). Plays a role in chloroplast biogenesis and differentiation in cotyledons, possibly through phosphorylation of chloroplast preproteins (PubMed:21799034).</text>
</comment>
<comment type="catalytic activity">
    <reaction evidence="5">
        <text>L-seryl-[protein] + ATP = O-phospho-L-seryl-[protein] + ADP + H(+)</text>
        <dbReference type="Rhea" id="RHEA:17989"/>
        <dbReference type="Rhea" id="RHEA-COMP:9863"/>
        <dbReference type="Rhea" id="RHEA-COMP:11604"/>
        <dbReference type="ChEBI" id="CHEBI:15378"/>
        <dbReference type="ChEBI" id="CHEBI:29999"/>
        <dbReference type="ChEBI" id="CHEBI:30616"/>
        <dbReference type="ChEBI" id="CHEBI:83421"/>
        <dbReference type="ChEBI" id="CHEBI:456216"/>
        <dbReference type="EC" id="2.7.11.1"/>
    </reaction>
</comment>
<comment type="catalytic activity">
    <reaction evidence="5">
        <text>L-threonyl-[protein] + ATP = O-phospho-L-threonyl-[protein] + ADP + H(+)</text>
        <dbReference type="Rhea" id="RHEA:46608"/>
        <dbReference type="Rhea" id="RHEA-COMP:11060"/>
        <dbReference type="Rhea" id="RHEA-COMP:11605"/>
        <dbReference type="ChEBI" id="CHEBI:15378"/>
        <dbReference type="ChEBI" id="CHEBI:30013"/>
        <dbReference type="ChEBI" id="CHEBI:30616"/>
        <dbReference type="ChEBI" id="CHEBI:61977"/>
        <dbReference type="ChEBI" id="CHEBI:456216"/>
        <dbReference type="EC" id="2.7.11.1"/>
    </reaction>
</comment>
<comment type="activity regulation">
    <text evidence="6">Activated by autophosphorylation at Thr-445.</text>
</comment>
<comment type="biophysicochemical properties">
    <kinetics>
        <KM evidence="5">14 uM for ATP</KM>
    </kinetics>
</comment>
<comment type="subcellular location">
    <subcellularLocation>
        <location evidence="6">Cytoplasm</location>
        <location evidence="6">Cytosol</location>
    </subcellularLocation>
</comment>
<comment type="PTM">
    <text evidence="6">Autophosphorylated on serine and threonine residues. Autophosphorylated at Thr-445.</text>
</comment>
<comment type="miscellaneous">
    <text evidence="6">Plants silencing STY17 does not show visible phenotype under normal growth conditions, but plants silencing STY17 in the double mutant sty8 and sty46 background show more severe retarded growth compared to the double mutant itself.</text>
</comment>
<comment type="similarity">
    <text evidence="2">Belongs to the protein kinase superfamily. Ser/Thr protein kinase family.</text>
</comment>
<comment type="sequence caution" evidence="8">
    <conflict type="erroneous gene model prediction">
        <sequence resource="EMBL-CDS" id="CAA20048"/>
    </conflict>
</comment>
<comment type="sequence caution" evidence="8">
    <conflict type="erroneous gene model prediction">
        <sequence resource="EMBL-CDS" id="CAB81487"/>
    </conflict>
</comment>
<keyword id="KW-0067">ATP-binding</keyword>
<keyword id="KW-0963">Cytoplasm</keyword>
<keyword id="KW-0418">Kinase</keyword>
<keyword id="KW-0547">Nucleotide-binding</keyword>
<keyword id="KW-0597">Phosphoprotein</keyword>
<keyword id="KW-1185">Reference proteome</keyword>
<keyword id="KW-0723">Serine/threonine-protein kinase</keyword>
<keyword id="KW-0808">Transferase</keyword>
<organism>
    <name type="scientific">Arabidopsis thaliana</name>
    <name type="common">Mouse-ear cress</name>
    <dbReference type="NCBI Taxonomy" id="3702"/>
    <lineage>
        <taxon>Eukaryota</taxon>
        <taxon>Viridiplantae</taxon>
        <taxon>Streptophyta</taxon>
        <taxon>Embryophyta</taxon>
        <taxon>Tracheophyta</taxon>
        <taxon>Spermatophyta</taxon>
        <taxon>Magnoliopsida</taxon>
        <taxon>eudicotyledons</taxon>
        <taxon>Gunneridae</taxon>
        <taxon>Pentapetalae</taxon>
        <taxon>rosids</taxon>
        <taxon>malvids</taxon>
        <taxon>Brassicales</taxon>
        <taxon>Brassicaceae</taxon>
        <taxon>Camelineae</taxon>
        <taxon>Arabidopsis</taxon>
    </lineage>
</organism>
<reference key="1">
    <citation type="journal article" date="1999" name="Nature">
        <title>Sequence and analysis of chromosome 4 of the plant Arabidopsis thaliana.</title>
        <authorList>
            <person name="Mayer K.F.X."/>
            <person name="Schueller C."/>
            <person name="Wambutt R."/>
            <person name="Murphy G."/>
            <person name="Volckaert G."/>
            <person name="Pohl T."/>
            <person name="Duesterhoeft A."/>
            <person name="Stiekema W."/>
            <person name="Entian K.-D."/>
            <person name="Terryn N."/>
            <person name="Harris B."/>
            <person name="Ansorge W."/>
            <person name="Brandt P."/>
            <person name="Grivell L.A."/>
            <person name="Rieger M."/>
            <person name="Weichselgartner M."/>
            <person name="de Simone V."/>
            <person name="Obermaier B."/>
            <person name="Mache R."/>
            <person name="Mueller M."/>
            <person name="Kreis M."/>
            <person name="Delseny M."/>
            <person name="Puigdomenech P."/>
            <person name="Watson M."/>
            <person name="Schmidtheini T."/>
            <person name="Reichert B."/>
            <person name="Portetelle D."/>
            <person name="Perez-Alonso M."/>
            <person name="Boutry M."/>
            <person name="Bancroft I."/>
            <person name="Vos P."/>
            <person name="Hoheisel J."/>
            <person name="Zimmermann W."/>
            <person name="Wedler H."/>
            <person name="Ridley P."/>
            <person name="Langham S.-A."/>
            <person name="McCullagh B."/>
            <person name="Bilham L."/>
            <person name="Robben J."/>
            <person name="van der Schueren J."/>
            <person name="Grymonprez B."/>
            <person name="Chuang Y.-J."/>
            <person name="Vandenbussche F."/>
            <person name="Braeken M."/>
            <person name="Weltjens I."/>
            <person name="Voet M."/>
            <person name="Bastiaens I."/>
            <person name="Aert R."/>
            <person name="Defoor E."/>
            <person name="Weitzenegger T."/>
            <person name="Bothe G."/>
            <person name="Ramsperger U."/>
            <person name="Hilbert H."/>
            <person name="Braun M."/>
            <person name="Holzer E."/>
            <person name="Brandt A."/>
            <person name="Peters S."/>
            <person name="van Staveren M."/>
            <person name="Dirkse W."/>
            <person name="Mooijman P."/>
            <person name="Klein Lankhorst R."/>
            <person name="Rose M."/>
            <person name="Hauf J."/>
            <person name="Koetter P."/>
            <person name="Berneiser S."/>
            <person name="Hempel S."/>
            <person name="Feldpausch M."/>
            <person name="Lamberth S."/>
            <person name="Van den Daele H."/>
            <person name="De Keyser A."/>
            <person name="Buysshaert C."/>
            <person name="Gielen J."/>
            <person name="Villarroel R."/>
            <person name="De Clercq R."/>
            <person name="van Montagu M."/>
            <person name="Rogers J."/>
            <person name="Cronin A."/>
            <person name="Quail M.A."/>
            <person name="Bray-Allen S."/>
            <person name="Clark L."/>
            <person name="Doggett J."/>
            <person name="Hall S."/>
            <person name="Kay M."/>
            <person name="Lennard N."/>
            <person name="McLay K."/>
            <person name="Mayes R."/>
            <person name="Pettett A."/>
            <person name="Rajandream M.A."/>
            <person name="Lyne M."/>
            <person name="Benes V."/>
            <person name="Rechmann S."/>
            <person name="Borkova D."/>
            <person name="Bloecker H."/>
            <person name="Scharfe M."/>
            <person name="Grimm M."/>
            <person name="Loehnert T.-H."/>
            <person name="Dose S."/>
            <person name="de Haan M."/>
            <person name="Maarse A.C."/>
            <person name="Schaefer M."/>
            <person name="Mueller-Auer S."/>
            <person name="Gabel C."/>
            <person name="Fuchs M."/>
            <person name="Fartmann B."/>
            <person name="Granderath K."/>
            <person name="Dauner D."/>
            <person name="Herzl A."/>
            <person name="Neumann S."/>
            <person name="Argiriou A."/>
            <person name="Vitale D."/>
            <person name="Liguori R."/>
            <person name="Piravandi E."/>
            <person name="Massenet O."/>
            <person name="Quigley F."/>
            <person name="Clabauld G."/>
            <person name="Muendlein A."/>
            <person name="Felber R."/>
            <person name="Schnabl S."/>
            <person name="Hiller R."/>
            <person name="Schmidt W."/>
            <person name="Lecharny A."/>
            <person name="Aubourg S."/>
            <person name="Chefdor F."/>
            <person name="Cooke R."/>
            <person name="Berger C."/>
            <person name="Monfort A."/>
            <person name="Casacuberta E."/>
            <person name="Gibbons T."/>
            <person name="Weber N."/>
            <person name="Vandenbol M."/>
            <person name="Bargues M."/>
            <person name="Terol J."/>
            <person name="Torres A."/>
            <person name="Perez-Perez A."/>
            <person name="Purnelle B."/>
            <person name="Bent E."/>
            <person name="Johnson S."/>
            <person name="Tacon D."/>
            <person name="Jesse T."/>
            <person name="Heijnen L."/>
            <person name="Schwarz S."/>
            <person name="Scholler P."/>
            <person name="Heber S."/>
            <person name="Francs P."/>
            <person name="Bielke C."/>
            <person name="Frishman D."/>
            <person name="Haase D."/>
            <person name="Lemcke K."/>
            <person name="Mewes H.-W."/>
            <person name="Stocker S."/>
            <person name="Zaccaria P."/>
            <person name="Bevan M."/>
            <person name="Wilson R.K."/>
            <person name="de la Bastide M."/>
            <person name="Habermann K."/>
            <person name="Parnell L."/>
            <person name="Dedhia N."/>
            <person name="Gnoj L."/>
            <person name="Schutz K."/>
            <person name="Huang E."/>
            <person name="Spiegel L."/>
            <person name="Sekhon M."/>
            <person name="Murray J."/>
            <person name="Sheet P."/>
            <person name="Cordes M."/>
            <person name="Abu-Threideh J."/>
            <person name="Stoneking T."/>
            <person name="Kalicki J."/>
            <person name="Graves T."/>
            <person name="Harmon G."/>
            <person name="Edwards J."/>
            <person name="Latreille P."/>
            <person name="Courtney L."/>
            <person name="Cloud J."/>
            <person name="Abbott A."/>
            <person name="Scott K."/>
            <person name="Johnson D."/>
            <person name="Minx P."/>
            <person name="Bentley D."/>
            <person name="Fulton B."/>
            <person name="Miller N."/>
            <person name="Greco T."/>
            <person name="Kemp K."/>
            <person name="Kramer J."/>
            <person name="Fulton L."/>
            <person name="Mardis E."/>
            <person name="Dante M."/>
            <person name="Pepin K."/>
            <person name="Hillier L.W."/>
            <person name="Nelson J."/>
            <person name="Spieth J."/>
            <person name="Ryan E."/>
            <person name="Andrews S."/>
            <person name="Geisel C."/>
            <person name="Layman D."/>
            <person name="Du H."/>
            <person name="Ali J."/>
            <person name="Berghoff A."/>
            <person name="Jones K."/>
            <person name="Drone K."/>
            <person name="Cotton M."/>
            <person name="Joshu C."/>
            <person name="Antonoiu B."/>
            <person name="Zidanic M."/>
            <person name="Strong C."/>
            <person name="Sun H."/>
            <person name="Lamar B."/>
            <person name="Yordan C."/>
            <person name="Ma P."/>
            <person name="Zhong J."/>
            <person name="Preston R."/>
            <person name="Vil D."/>
            <person name="Shekher M."/>
            <person name="Matero A."/>
            <person name="Shah R."/>
            <person name="Swaby I.K."/>
            <person name="O'Shaughnessy A."/>
            <person name="Rodriguez M."/>
            <person name="Hoffman J."/>
            <person name="Till S."/>
            <person name="Granat S."/>
            <person name="Shohdy N."/>
            <person name="Hasegawa A."/>
            <person name="Hameed A."/>
            <person name="Lodhi M."/>
            <person name="Johnson A."/>
            <person name="Chen E."/>
            <person name="Marra M.A."/>
            <person name="Martienssen R."/>
            <person name="McCombie W.R."/>
        </authorList>
    </citation>
    <scope>NUCLEOTIDE SEQUENCE [LARGE SCALE GENOMIC DNA]</scope>
    <source>
        <strain>cv. Columbia</strain>
    </source>
</reference>
<reference key="2">
    <citation type="journal article" date="2017" name="Plant J.">
        <title>Araport11: a complete reannotation of the Arabidopsis thaliana reference genome.</title>
        <authorList>
            <person name="Cheng C.Y."/>
            <person name="Krishnakumar V."/>
            <person name="Chan A.P."/>
            <person name="Thibaud-Nissen F."/>
            <person name="Schobel S."/>
            <person name="Town C.D."/>
        </authorList>
    </citation>
    <scope>GENOME REANNOTATION</scope>
    <source>
        <strain>cv. Columbia</strain>
    </source>
</reference>
<reference key="3">
    <citation type="journal article" date="2003" name="Science">
        <title>Empirical analysis of transcriptional activity in the Arabidopsis genome.</title>
        <authorList>
            <person name="Yamada K."/>
            <person name="Lim J."/>
            <person name="Dale J.M."/>
            <person name="Chen H."/>
            <person name="Shinn P."/>
            <person name="Palm C.J."/>
            <person name="Southwick A.M."/>
            <person name="Wu H.C."/>
            <person name="Kim C.J."/>
            <person name="Nguyen M."/>
            <person name="Pham P.K."/>
            <person name="Cheuk R.F."/>
            <person name="Karlin-Newmann G."/>
            <person name="Liu S.X."/>
            <person name="Lam B."/>
            <person name="Sakano H."/>
            <person name="Wu T."/>
            <person name="Yu G."/>
            <person name="Miranda M."/>
            <person name="Quach H.L."/>
            <person name="Tripp M."/>
            <person name="Chang C.H."/>
            <person name="Lee J.M."/>
            <person name="Toriumi M.J."/>
            <person name="Chan M.M."/>
            <person name="Tang C.C."/>
            <person name="Onodera C.S."/>
            <person name="Deng J.M."/>
            <person name="Akiyama K."/>
            <person name="Ansari Y."/>
            <person name="Arakawa T."/>
            <person name="Banh J."/>
            <person name="Banno F."/>
            <person name="Bowser L."/>
            <person name="Brooks S.Y."/>
            <person name="Carninci P."/>
            <person name="Chao Q."/>
            <person name="Choy N."/>
            <person name="Enju A."/>
            <person name="Goldsmith A.D."/>
            <person name="Gurjal M."/>
            <person name="Hansen N.F."/>
            <person name="Hayashizaki Y."/>
            <person name="Johnson-Hopson C."/>
            <person name="Hsuan V.W."/>
            <person name="Iida K."/>
            <person name="Karnes M."/>
            <person name="Khan S."/>
            <person name="Koesema E."/>
            <person name="Ishida J."/>
            <person name="Jiang P.X."/>
            <person name="Jones T."/>
            <person name="Kawai J."/>
            <person name="Kamiya A."/>
            <person name="Meyers C."/>
            <person name="Nakajima M."/>
            <person name="Narusaka M."/>
            <person name="Seki M."/>
            <person name="Sakurai T."/>
            <person name="Satou M."/>
            <person name="Tamse R."/>
            <person name="Vaysberg M."/>
            <person name="Wallender E.K."/>
            <person name="Wong C."/>
            <person name="Yamamura Y."/>
            <person name="Yuan S."/>
            <person name="Shinozaki K."/>
            <person name="Davis R.W."/>
            <person name="Theologis A."/>
            <person name="Ecker J.R."/>
        </authorList>
    </citation>
    <scope>NUCLEOTIDE SEQUENCE [LARGE SCALE MRNA]</scope>
    <source>
        <strain>cv. Columbia</strain>
    </source>
</reference>
<reference key="4">
    <citation type="journal article" date="2006" name="J. Biol. Chem.">
        <title>A protein kinase family in Arabidopsis phosphorylates chloroplast precursor proteins.</title>
        <authorList>
            <person name="Martin T."/>
            <person name="Sharma R."/>
            <person name="Sippel C."/>
            <person name="Waegemann K."/>
            <person name="Soll J."/>
            <person name="Vothknecht U.C."/>
        </authorList>
    </citation>
    <scope>FUNCTION</scope>
    <scope>CATALYTIC ACTIVITY</scope>
    <scope>BIOPHYSICOCHEMICAL PROPERTIES</scope>
</reference>
<reference key="5">
    <citation type="journal article" date="2006" name="Plant Mol. Biol.">
        <title>Genome-wide analysis and experimentation of plant serine/threonine/tyrosine-specific protein kinases.</title>
        <authorList>
            <person name="Rudrabhatla P."/>
            <person name="Reddy M.M."/>
            <person name="Rajasekharan R."/>
        </authorList>
    </citation>
    <scope>GENE FAMILY</scope>
    <scope>NOMENCLATURE</scope>
</reference>
<reference key="6">
    <citation type="journal article" date="2009" name="Plant Physiol.">
        <title>Large-scale Arabidopsis phosphoproteome profiling reveals novel chloroplast kinase substrates and phosphorylation networks.</title>
        <authorList>
            <person name="Reiland S."/>
            <person name="Messerli G."/>
            <person name="Baerenfaller K."/>
            <person name="Gerrits B."/>
            <person name="Endler A."/>
            <person name="Grossmann J."/>
            <person name="Gruissem W."/>
            <person name="Baginsky S."/>
        </authorList>
    </citation>
    <scope>IDENTIFICATION BY MASS SPECTROMETRY [LARGE SCALE ANALYSIS]</scope>
</reference>
<reference key="7">
    <citation type="journal article" date="2011" name="Plant Physiol.">
        <title>The cytosolic kinases STY8, STY17, and STY46 are involved in chloroplast differentiation in Arabidopsis.</title>
        <authorList>
            <person name="Lamberti G."/>
            <person name="Gugel I.L."/>
            <person name="Meurer J."/>
            <person name="Soll J."/>
            <person name="Schwenkert S."/>
        </authorList>
    </citation>
    <scope>FUNCTION</scope>
    <scope>ACTIVITY REGULATION</scope>
    <scope>SUBCELLULAR LOCATION</scope>
    <scope>PHOSPHORYLATION AT THR-445</scope>
    <scope>MUTAGENESIS OF THR-445</scope>
</reference>
<dbReference type="EC" id="2.7.11.1" evidence="5"/>
<dbReference type="EMBL" id="AL031135">
    <property type="protein sequence ID" value="CAA20048.1"/>
    <property type="status" value="ALT_SEQ"/>
    <property type="molecule type" value="Genomic_DNA"/>
</dbReference>
<dbReference type="EMBL" id="AL161588">
    <property type="protein sequence ID" value="CAB81487.1"/>
    <property type="status" value="ALT_SEQ"/>
    <property type="molecule type" value="Genomic_DNA"/>
</dbReference>
<dbReference type="EMBL" id="CP002687">
    <property type="protein sequence ID" value="AEE86563.1"/>
    <property type="molecule type" value="Genomic_DNA"/>
</dbReference>
<dbReference type="EMBL" id="AY093017">
    <property type="protein sequence ID" value="AAM13016.1"/>
    <property type="molecule type" value="mRNA"/>
</dbReference>
<dbReference type="EMBL" id="AY128938">
    <property type="protein sequence ID" value="AAM91338.1"/>
    <property type="molecule type" value="mRNA"/>
</dbReference>
<dbReference type="PIR" id="T04683">
    <property type="entry name" value="T04683"/>
</dbReference>
<dbReference type="PIR" id="T04688">
    <property type="entry name" value="T04688"/>
</dbReference>
<dbReference type="RefSeq" id="NP_195303.2">
    <property type="nucleotide sequence ID" value="NM_119744.5"/>
</dbReference>
<dbReference type="SMR" id="Q8RWL6"/>
<dbReference type="FunCoup" id="Q8RWL6">
    <property type="interactions" value="586"/>
</dbReference>
<dbReference type="IntAct" id="Q8RWL6">
    <property type="interactions" value="2"/>
</dbReference>
<dbReference type="STRING" id="3702.Q8RWL6"/>
<dbReference type="iPTMnet" id="Q8RWL6"/>
<dbReference type="PaxDb" id="3702-AT4G35780.1"/>
<dbReference type="ProteomicsDB" id="228309"/>
<dbReference type="EnsemblPlants" id="AT4G35780.1">
    <property type="protein sequence ID" value="AT4G35780.1"/>
    <property type="gene ID" value="AT4G35780"/>
</dbReference>
<dbReference type="GeneID" id="829731"/>
<dbReference type="Gramene" id="AT4G35780.1">
    <property type="protein sequence ID" value="AT4G35780.1"/>
    <property type="gene ID" value="AT4G35780"/>
</dbReference>
<dbReference type="KEGG" id="ath:AT4G35780"/>
<dbReference type="Araport" id="AT4G35780"/>
<dbReference type="TAIR" id="AT4G35780">
    <property type="gene designation" value="STY17"/>
</dbReference>
<dbReference type="eggNOG" id="KOG0192">
    <property type="taxonomic scope" value="Eukaryota"/>
</dbReference>
<dbReference type="HOGENOM" id="CLU_000288_7_28_1"/>
<dbReference type="InParanoid" id="Q8RWL6"/>
<dbReference type="OMA" id="FEVRCVQ"/>
<dbReference type="PhylomeDB" id="Q8RWL6"/>
<dbReference type="SABIO-RK" id="Q8RWL6"/>
<dbReference type="PRO" id="PR:Q8RWL6"/>
<dbReference type="Proteomes" id="UP000006548">
    <property type="component" value="Chromosome 4"/>
</dbReference>
<dbReference type="ExpressionAtlas" id="Q8RWL6">
    <property type="expression patterns" value="baseline and differential"/>
</dbReference>
<dbReference type="GO" id="GO:0005829">
    <property type="term" value="C:cytosol"/>
    <property type="evidence" value="ECO:0000314"/>
    <property type="project" value="TAIR"/>
</dbReference>
<dbReference type="GO" id="GO:0005524">
    <property type="term" value="F:ATP binding"/>
    <property type="evidence" value="ECO:0007669"/>
    <property type="project" value="UniProtKB-KW"/>
</dbReference>
<dbReference type="GO" id="GO:0106310">
    <property type="term" value="F:protein serine kinase activity"/>
    <property type="evidence" value="ECO:0007669"/>
    <property type="project" value="RHEA"/>
</dbReference>
<dbReference type="GO" id="GO:0004674">
    <property type="term" value="F:protein serine/threonine kinase activity"/>
    <property type="evidence" value="ECO:0000314"/>
    <property type="project" value="UniProtKB"/>
</dbReference>
<dbReference type="GO" id="GO:0004712">
    <property type="term" value="F:protein serine/threonine/tyrosine kinase activity"/>
    <property type="evidence" value="ECO:0000250"/>
    <property type="project" value="TAIR"/>
</dbReference>
<dbReference type="GO" id="GO:0009658">
    <property type="term" value="P:chloroplast organization"/>
    <property type="evidence" value="ECO:0000316"/>
    <property type="project" value="TAIR"/>
</dbReference>
<dbReference type="CDD" id="cd04928">
    <property type="entry name" value="ACT_TyrKc"/>
    <property type="match status" value="1"/>
</dbReference>
<dbReference type="CDD" id="cd13999">
    <property type="entry name" value="STKc_MAP3K-like"/>
    <property type="match status" value="1"/>
</dbReference>
<dbReference type="FunFam" id="1.10.510.10:FF:000316">
    <property type="entry name" value="serine/threonine-protein kinase HT1"/>
    <property type="match status" value="1"/>
</dbReference>
<dbReference type="FunFam" id="3.30.200.20:FF:000060">
    <property type="entry name" value="Serine/threonine-protein kinase isoform 1"/>
    <property type="match status" value="1"/>
</dbReference>
<dbReference type="Gene3D" id="3.30.70.260">
    <property type="match status" value="1"/>
</dbReference>
<dbReference type="Gene3D" id="3.30.200.20">
    <property type="entry name" value="Phosphorylase Kinase, domain 1"/>
    <property type="match status" value="1"/>
</dbReference>
<dbReference type="Gene3D" id="1.10.510.10">
    <property type="entry name" value="Transferase(Phosphotransferase) domain 1"/>
    <property type="match status" value="1"/>
</dbReference>
<dbReference type="InterPro" id="IPR045865">
    <property type="entry name" value="ACT-like_dom_sf"/>
</dbReference>
<dbReference type="InterPro" id="IPR002912">
    <property type="entry name" value="ACT_dom"/>
</dbReference>
<dbReference type="InterPro" id="IPR011009">
    <property type="entry name" value="Kinase-like_dom_sf"/>
</dbReference>
<dbReference type="InterPro" id="IPR000719">
    <property type="entry name" value="Prot_kinase_dom"/>
</dbReference>
<dbReference type="InterPro" id="IPR001245">
    <property type="entry name" value="Ser-Thr/Tyr_kinase_cat_dom"/>
</dbReference>
<dbReference type="InterPro" id="IPR008271">
    <property type="entry name" value="Ser/Thr_kinase_AS"/>
</dbReference>
<dbReference type="InterPro" id="IPR051681">
    <property type="entry name" value="Ser/Thr_Kinases-Pseudokinases"/>
</dbReference>
<dbReference type="PANTHER" id="PTHR44329">
    <property type="entry name" value="SERINE/THREONINE-PROTEIN KINASE TNNI3K-RELATED"/>
    <property type="match status" value="1"/>
</dbReference>
<dbReference type="PANTHER" id="PTHR44329:SF151">
    <property type="entry name" value="SERINE_THREONINE-PROTEIN KINASE STY17"/>
    <property type="match status" value="1"/>
</dbReference>
<dbReference type="Pfam" id="PF07714">
    <property type="entry name" value="PK_Tyr_Ser-Thr"/>
    <property type="match status" value="1"/>
</dbReference>
<dbReference type="PRINTS" id="PR00109">
    <property type="entry name" value="TYRKINASE"/>
</dbReference>
<dbReference type="SMART" id="SM00220">
    <property type="entry name" value="S_TKc"/>
    <property type="match status" value="1"/>
</dbReference>
<dbReference type="SUPFAM" id="SSF55021">
    <property type="entry name" value="ACT-like"/>
    <property type="match status" value="1"/>
</dbReference>
<dbReference type="SUPFAM" id="SSF56112">
    <property type="entry name" value="Protein kinase-like (PK-like)"/>
    <property type="match status" value="1"/>
</dbReference>
<dbReference type="PROSITE" id="PS51671">
    <property type="entry name" value="ACT"/>
    <property type="match status" value="1"/>
</dbReference>
<dbReference type="PROSITE" id="PS50011">
    <property type="entry name" value="PROTEIN_KINASE_DOM"/>
    <property type="match status" value="1"/>
</dbReference>
<dbReference type="PROSITE" id="PS00108">
    <property type="entry name" value="PROTEIN_KINASE_ST"/>
    <property type="match status" value="1"/>
</dbReference>
<protein>
    <recommendedName>
        <fullName evidence="8">Serine/threonine-protein kinase STY17</fullName>
        <ecNumber evidence="5">2.7.11.1</ecNumber>
    </recommendedName>
    <alternativeName>
        <fullName evidence="7">Serine/threonine/tyrosine-protein kinase 17</fullName>
    </alternativeName>
</protein>